<organism>
    <name type="scientific">Anaplasma marginale (strain Florida)</name>
    <dbReference type="NCBI Taxonomy" id="320483"/>
    <lineage>
        <taxon>Bacteria</taxon>
        <taxon>Pseudomonadati</taxon>
        <taxon>Pseudomonadota</taxon>
        <taxon>Alphaproteobacteria</taxon>
        <taxon>Rickettsiales</taxon>
        <taxon>Anaplasmataceae</taxon>
        <taxon>Anaplasma</taxon>
    </lineage>
</organism>
<evidence type="ECO:0000255" key="1">
    <source>
        <dbReference type="HAMAP-Rule" id="MF_00038"/>
    </source>
</evidence>
<gene>
    <name evidence="1" type="primary">mraY</name>
    <name type="ordered locus">AMF_908</name>
</gene>
<reference key="1">
    <citation type="journal article" date="2009" name="BMC Genomics">
        <title>Conservation in the face of diversity: multistrain analysis of an intracellular bacterium.</title>
        <authorList>
            <person name="Dark M.J."/>
            <person name="Herndon D.R."/>
            <person name="Kappmeyer L.S."/>
            <person name="Gonzales M.P."/>
            <person name="Nordeen E."/>
            <person name="Palmer G.H."/>
            <person name="Knowles D.P. Jr."/>
            <person name="Brayton K.A."/>
        </authorList>
    </citation>
    <scope>NUCLEOTIDE SEQUENCE [LARGE SCALE GENOMIC DNA]</scope>
    <source>
        <strain>Florida</strain>
    </source>
</reference>
<sequence>MFSPIGKVAQPYFCSFLLSTILGFVIAPRTIAALKNIQKGRNPVRSCFPAAHLAKKSGIPSMGGVIILLPCILSTAIFGDLHDRDIWVILTTMVAFAILGGVDDYLKFTRQNPQGISLEAKLFAQLLIASAALIFLSYTSDSFTSTHIFSKGLIDLGWAYMPFAYIVVVGSSNSVNLTDGLDGLATLPIITSTAILGIIGHLSLQFGAEPPGVVGANIPIFCSALVGSALSFLWFNAHPAQVFMGDLGSLSLGASLGLMSVMLKCEFIYAISGCIFVAEAISSMAQVAYCKLTKGRKIFLVAPIHHHFEKAGLKEATIVTRAWVIAMVSFVVSLAAIIYIYR</sequence>
<proteinExistence type="inferred from homology"/>
<comment type="function">
    <text evidence="1">Catalyzes the initial step of the lipid cycle reactions in the biosynthesis of the cell wall peptidoglycan: transfers peptidoglycan precursor phospho-MurNAc-pentapeptide from UDP-MurNAc-pentapeptide onto the lipid carrier undecaprenyl phosphate, yielding undecaprenyl-pyrophosphoryl-MurNAc-pentapeptide, known as lipid I.</text>
</comment>
<comment type="catalytic activity">
    <reaction evidence="1">
        <text>UDP-N-acetyl-alpha-D-muramoyl-L-alanyl-gamma-D-glutamyl-meso-2,6-diaminopimeloyl-D-alanyl-D-alanine + di-trans,octa-cis-undecaprenyl phosphate = di-trans,octa-cis-undecaprenyl diphospho-N-acetyl-alpha-D-muramoyl-L-alanyl-D-glutamyl-meso-2,6-diaminopimeloyl-D-alanyl-D-alanine + UMP</text>
        <dbReference type="Rhea" id="RHEA:28386"/>
        <dbReference type="ChEBI" id="CHEBI:57865"/>
        <dbReference type="ChEBI" id="CHEBI:60392"/>
        <dbReference type="ChEBI" id="CHEBI:61386"/>
        <dbReference type="ChEBI" id="CHEBI:61387"/>
        <dbReference type="EC" id="2.7.8.13"/>
    </reaction>
</comment>
<comment type="cofactor">
    <cofactor evidence="1">
        <name>Mg(2+)</name>
        <dbReference type="ChEBI" id="CHEBI:18420"/>
    </cofactor>
</comment>
<comment type="pathway">
    <text evidence="1">Cell wall biogenesis; peptidoglycan biosynthesis.</text>
</comment>
<comment type="subcellular location">
    <subcellularLocation>
        <location evidence="1">Cell inner membrane</location>
        <topology evidence="1">Multi-pass membrane protein</topology>
    </subcellularLocation>
</comment>
<comment type="similarity">
    <text evidence="1">Belongs to the glycosyltransferase 4 family. MraY subfamily.</text>
</comment>
<name>MRAY_ANAMF</name>
<dbReference type="EC" id="2.7.8.13" evidence="1"/>
<dbReference type="EMBL" id="CP001079">
    <property type="protein sequence ID" value="ACM49733.1"/>
    <property type="molecule type" value="Genomic_DNA"/>
</dbReference>
<dbReference type="RefSeq" id="WP_010268791.1">
    <property type="nucleotide sequence ID" value="NZ_AFMS01000124.1"/>
</dbReference>
<dbReference type="SMR" id="B9KH29"/>
<dbReference type="STRING" id="320483.AMF_908"/>
<dbReference type="KEGG" id="amf:AMF_908"/>
<dbReference type="eggNOG" id="COG0472">
    <property type="taxonomic scope" value="Bacteria"/>
</dbReference>
<dbReference type="HOGENOM" id="CLU_023982_0_1_5"/>
<dbReference type="UniPathway" id="UPA00219"/>
<dbReference type="Proteomes" id="UP000007307">
    <property type="component" value="Chromosome"/>
</dbReference>
<dbReference type="GO" id="GO:0005886">
    <property type="term" value="C:plasma membrane"/>
    <property type="evidence" value="ECO:0007669"/>
    <property type="project" value="UniProtKB-SubCell"/>
</dbReference>
<dbReference type="GO" id="GO:0046872">
    <property type="term" value="F:metal ion binding"/>
    <property type="evidence" value="ECO:0007669"/>
    <property type="project" value="UniProtKB-KW"/>
</dbReference>
<dbReference type="GO" id="GO:0008963">
    <property type="term" value="F:phospho-N-acetylmuramoyl-pentapeptide-transferase activity"/>
    <property type="evidence" value="ECO:0007669"/>
    <property type="project" value="UniProtKB-UniRule"/>
</dbReference>
<dbReference type="GO" id="GO:0051992">
    <property type="term" value="F:UDP-N-acetylmuramoyl-L-alanyl-D-glutamyl-meso-2,6-diaminopimelyl-D-alanyl-D-alanine:undecaprenyl-phosphate transferase activity"/>
    <property type="evidence" value="ECO:0007669"/>
    <property type="project" value="RHEA"/>
</dbReference>
<dbReference type="GO" id="GO:0051301">
    <property type="term" value="P:cell division"/>
    <property type="evidence" value="ECO:0007669"/>
    <property type="project" value="UniProtKB-KW"/>
</dbReference>
<dbReference type="GO" id="GO:0071555">
    <property type="term" value="P:cell wall organization"/>
    <property type="evidence" value="ECO:0007669"/>
    <property type="project" value="UniProtKB-KW"/>
</dbReference>
<dbReference type="GO" id="GO:0009252">
    <property type="term" value="P:peptidoglycan biosynthetic process"/>
    <property type="evidence" value="ECO:0007669"/>
    <property type="project" value="UniProtKB-UniRule"/>
</dbReference>
<dbReference type="GO" id="GO:0008360">
    <property type="term" value="P:regulation of cell shape"/>
    <property type="evidence" value="ECO:0007669"/>
    <property type="project" value="UniProtKB-KW"/>
</dbReference>
<dbReference type="CDD" id="cd06852">
    <property type="entry name" value="GT_MraY"/>
    <property type="match status" value="1"/>
</dbReference>
<dbReference type="HAMAP" id="MF_00038">
    <property type="entry name" value="MraY"/>
    <property type="match status" value="1"/>
</dbReference>
<dbReference type="InterPro" id="IPR000715">
    <property type="entry name" value="Glycosyl_transferase_4"/>
</dbReference>
<dbReference type="InterPro" id="IPR003524">
    <property type="entry name" value="PNAcMuramoyl-5peptid_Trfase"/>
</dbReference>
<dbReference type="InterPro" id="IPR018480">
    <property type="entry name" value="PNAcMuramoyl-5peptid_Trfase_CS"/>
</dbReference>
<dbReference type="NCBIfam" id="TIGR00445">
    <property type="entry name" value="mraY"/>
    <property type="match status" value="1"/>
</dbReference>
<dbReference type="PANTHER" id="PTHR22926">
    <property type="entry name" value="PHOSPHO-N-ACETYLMURAMOYL-PENTAPEPTIDE-TRANSFERASE"/>
    <property type="match status" value="1"/>
</dbReference>
<dbReference type="PANTHER" id="PTHR22926:SF5">
    <property type="entry name" value="PHOSPHO-N-ACETYLMURAMOYL-PENTAPEPTIDE-TRANSFERASE HOMOLOG"/>
    <property type="match status" value="1"/>
</dbReference>
<dbReference type="Pfam" id="PF00953">
    <property type="entry name" value="Glycos_transf_4"/>
    <property type="match status" value="1"/>
</dbReference>
<dbReference type="Pfam" id="PF10555">
    <property type="entry name" value="MraY_sig1"/>
    <property type="match status" value="1"/>
</dbReference>
<dbReference type="PROSITE" id="PS01347">
    <property type="entry name" value="MRAY_1"/>
    <property type="match status" value="1"/>
</dbReference>
<dbReference type="PROSITE" id="PS01348">
    <property type="entry name" value="MRAY_2"/>
    <property type="match status" value="1"/>
</dbReference>
<protein>
    <recommendedName>
        <fullName evidence="1">Phospho-N-acetylmuramoyl-pentapeptide-transferase</fullName>
        <ecNumber evidence="1">2.7.8.13</ecNumber>
    </recommendedName>
    <alternativeName>
        <fullName evidence="1">UDP-MurNAc-pentapeptide phosphotransferase</fullName>
    </alternativeName>
</protein>
<accession>B9KH29</accession>
<keyword id="KW-0131">Cell cycle</keyword>
<keyword id="KW-0132">Cell division</keyword>
<keyword id="KW-0997">Cell inner membrane</keyword>
<keyword id="KW-1003">Cell membrane</keyword>
<keyword id="KW-0133">Cell shape</keyword>
<keyword id="KW-0961">Cell wall biogenesis/degradation</keyword>
<keyword id="KW-0460">Magnesium</keyword>
<keyword id="KW-0472">Membrane</keyword>
<keyword id="KW-0479">Metal-binding</keyword>
<keyword id="KW-0573">Peptidoglycan synthesis</keyword>
<keyword id="KW-1185">Reference proteome</keyword>
<keyword id="KW-0808">Transferase</keyword>
<keyword id="KW-0812">Transmembrane</keyword>
<keyword id="KW-1133">Transmembrane helix</keyword>
<feature type="chain" id="PRO_1000117157" description="Phospho-N-acetylmuramoyl-pentapeptide-transferase">
    <location>
        <begin position="1"/>
        <end position="342"/>
    </location>
</feature>
<feature type="transmembrane region" description="Helical" evidence="1">
    <location>
        <begin position="8"/>
        <end position="28"/>
    </location>
</feature>
<feature type="transmembrane region" description="Helical" evidence="1">
    <location>
        <begin position="58"/>
        <end position="78"/>
    </location>
</feature>
<feature type="transmembrane region" description="Helical" evidence="1">
    <location>
        <begin position="86"/>
        <end position="106"/>
    </location>
</feature>
<feature type="transmembrane region" description="Helical" evidence="1">
    <location>
        <begin position="116"/>
        <end position="136"/>
    </location>
</feature>
<feature type="transmembrane region" description="Helical" evidence="1">
    <location>
        <begin position="152"/>
        <end position="172"/>
    </location>
</feature>
<feature type="transmembrane region" description="Helical" evidence="1">
    <location>
        <begin position="184"/>
        <end position="204"/>
    </location>
</feature>
<feature type="transmembrane region" description="Helical" evidence="1">
    <location>
        <begin position="213"/>
        <end position="233"/>
    </location>
</feature>
<feature type="transmembrane region" description="Helical" evidence="1">
    <location>
        <begin position="242"/>
        <end position="262"/>
    </location>
</feature>
<feature type="transmembrane region" description="Helical" evidence="1">
    <location>
        <begin position="267"/>
        <end position="287"/>
    </location>
</feature>
<feature type="transmembrane region" description="Helical" evidence="1">
    <location>
        <begin position="318"/>
        <end position="338"/>
    </location>
</feature>